<comment type="function">
    <text evidence="1">Bidirectionally degrades single-stranded DNA into large acid-insoluble oligonucleotides, which are then degraded further into small acid-soluble oligonucleotides.</text>
</comment>
<comment type="catalytic activity">
    <reaction evidence="1">
        <text>Exonucleolytic cleavage in either 5'- to 3'- or 3'- to 5'-direction to yield nucleoside 5'-phosphates.</text>
        <dbReference type="EC" id="3.1.11.6"/>
    </reaction>
</comment>
<comment type="subunit">
    <text evidence="1">Heterooligomer composed of large and small subunits.</text>
</comment>
<comment type="subcellular location">
    <subcellularLocation>
        <location evidence="1">Cytoplasm</location>
    </subcellularLocation>
</comment>
<comment type="similarity">
    <text evidence="1">Belongs to the XseA family.</text>
</comment>
<keyword id="KW-0963">Cytoplasm</keyword>
<keyword id="KW-0269">Exonuclease</keyword>
<keyword id="KW-0378">Hydrolase</keyword>
<keyword id="KW-0540">Nuclease</keyword>
<keyword id="KW-1185">Reference proteome</keyword>
<name>EX7L_SALRD</name>
<dbReference type="EC" id="3.1.11.6" evidence="1"/>
<dbReference type="EMBL" id="CP000159">
    <property type="protein sequence ID" value="ABC44451.1"/>
    <property type="molecule type" value="Genomic_DNA"/>
</dbReference>
<dbReference type="RefSeq" id="YP_444876.1">
    <property type="nucleotide sequence ID" value="NC_007677.1"/>
</dbReference>
<dbReference type="SMR" id="Q2S4K5"/>
<dbReference type="STRING" id="309807.SRU_0738"/>
<dbReference type="EnsemblBacteria" id="ABC44451">
    <property type="protein sequence ID" value="ABC44451"/>
    <property type="gene ID" value="SRU_0738"/>
</dbReference>
<dbReference type="KEGG" id="sru:SRU_0738"/>
<dbReference type="PATRIC" id="fig|309807.25.peg.758"/>
<dbReference type="eggNOG" id="COG1570">
    <property type="taxonomic scope" value="Bacteria"/>
</dbReference>
<dbReference type="HOGENOM" id="CLU_023625_2_0_10"/>
<dbReference type="OrthoDB" id="9802795at2"/>
<dbReference type="Proteomes" id="UP000008674">
    <property type="component" value="Chromosome"/>
</dbReference>
<dbReference type="GO" id="GO:0005737">
    <property type="term" value="C:cytoplasm"/>
    <property type="evidence" value="ECO:0007669"/>
    <property type="project" value="UniProtKB-SubCell"/>
</dbReference>
<dbReference type="GO" id="GO:0009318">
    <property type="term" value="C:exodeoxyribonuclease VII complex"/>
    <property type="evidence" value="ECO:0007669"/>
    <property type="project" value="InterPro"/>
</dbReference>
<dbReference type="GO" id="GO:0008855">
    <property type="term" value="F:exodeoxyribonuclease VII activity"/>
    <property type="evidence" value="ECO:0007669"/>
    <property type="project" value="UniProtKB-UniRule"/>
</dbReference>
<dbReference type="GO" id="GO:0003676">
    <property type="term" value="F:nucleic acid binding"/>
    <property type="evidence" value="ECO:0007669"/>
    <property type="project" value="InterPro"/>
</dbReference>
<dbReference type="GO" id="GO:0006308">
    <property type="term" value="P:DNA catabolic process"/>
    <property type="evidence" value="ECO:0007669"/>
    <property type="project" value="UniProtKB-UniRule"/>
</dbReference>
<dbReference type="CDD" id="cd04489">
    <property type="entry name" value="ExoVII_LU_OBF"/>
    <property type="match status" value="1"/>
</dbReference>
<dbReference type="HAMAP" id="MF_00378">
    <property type="entry name" value="Exonuc_7_L"/>
    <property type="match status" value="1"/>
</dbReference>
<dbReference type="InterPro" id="IPR003753">
    <property type="entry name" value="Exonuc_VII_L"/>
</dbReference>
<dbReference type="InterPro" id="IPR020579">
    <property type="entry name" value="Exonuc_VII_lsu_C"/>
</dbReference>
<dbReference type="InterPro" id="IPR025824">
    <property type="entry name" value="OB-fold_nuc-bd_dom"/>
</dbReference>
<dbReference type="NCBIfam" id="TIGR00237">
    <property type="entry name" value="xseA"/>
    <property type="match status" value="1"/>
</dbReference>
<dbReference type="PANTHER" id="PTHR30008">
    <property type="entry name" value="EXODEOXYRIBONUCLEASE 7 LARGE SUBUNIT"/>
    <property type="match status" value="1"/>
</dbReference>
<dbReference type="PANTHER" id="PTHR30008:SF0">
    <property type="entry name" value="EXODEOXYRIBONUCLEASE 7 LARGE SUBUNIT"/>
    <property type="match status" value="1"/>
</dbReference>
<dbReference type="Pfam" id="PF02601">
    <property type="entry name" value="Exonuc_VII_L"/>
    <property type="match status" value="2"/>
</dbReference>
<dbReference type="Pfam" id="PF13742">
    <property type="entry name" value="tRNA_anti_2"/>
    <property type="match status" value="1"/>
</dbReference>
<reference key="1">
    <citation type="journal article" date="2005" name="Proc. Natl. Acad. Sci. U.S.A.">
        <title>The genome of Salinibacter ruber: convergence and gene exchange among hyperhalophilic bacteria and archaea.</title>
        <authorList>
            <person name="Mongodin E.F."/>
            <person name="Nelson K.E."/>
            <person name="Daugherty S."/>
            <person name="DeBoy R.T."/>
            <person name="Wister J."/>
            <person name="Khouri H."/>
            <person name="Weidman J."/>
            <person name="Walsh D.A."/>
            <person name="Papke R.T."/>
            <person name="Sanchez Perez G."/>
            <person name="Sharma A.K."/>
            <person name="Nesbo C.L."/>
            <person name="MacLeod D."/>
            <person name="Bapteste E."/>
            <person name="Doolittle W.F."/>
            <person name="Charlebois R.L."/>
            <person name="Legault B."/>
            <person name="Rodriguez-Valera F."/>
        </authorList>
    </citation>
    <scope>NUCLEOTIDE SEQUENCE [LARGE SCALE GENOMIC DNA]</scope>
    <source>
        <strain>DSM 13855 / CECT 5946 / M31</strain>
    </source>
</reference>
<proteinExistence type="inferred from homology"/>
<accession>Q2S4K5</accession>
<gene>
    <name evidence="1" type="primary">xseA</name>
    <name type="ordered locus">SRU_0738</name>
</gene>
<sequence length="398" mass="43905">MLSVAELTRGLSDLVEDRYDDVWVEGELSDFTRAASGHCYFSLKDEDAQIRCVMWKHLTQYVYFEPEEGMQVRVNGHASVYERRGDLQIQAQAMRQAGKGAQQKAFEELKQTLQAEGLFAPERKQALPAFPDTIGVVTSGQGAAIHDIQSGLARRFPPAEVVLCPVKVQGLDAPRAVADAVAAFNDLPADDAQRPDLLIVGRGGGSTEDLWAFNEEVVARALDASNLPVVSAVGHESDVTIADLVADERAATPSAAAERVVPDRRDVADRVRALHDRLRSRVTGRLQDARQRVDALVASRAFHAPARRLEQHRQHLDALVDRLGRGGARAVDRARTRLAHLRDRLHALDPEQPLRRGYVHLTQDGTSVQSAESLQDGDRVRLHFQDGRRDAEVLPDDG</sequence>
<evidence type="ECO:0000255" key="1">
    <source>
        <dbReference type="HAMAP-Rule" id="MF_00378"/>
    </source>
</evidence>
<organism>
    <name type="scientific">Salinibacter ruber (strain DSM 13855 / M31)</name>
    <dbReference type="NCBI Taxonomy" id="309807"/>
    <lineage>
        <taxon>Bacteria</taxon>
        <taxon>Pseudomonadati</taxon>
        <taxon>Rhodothermota</taxon>
        <taxon>Rhodothermia</taxon>
        <taxon>Rhodothermales</taxon>
        <taxon>Salinibacteraceae</taxon>
        <taxon>Salinibacter</taxon>
    </lineage>
</organism>
<protein>
    <recommendedName>
        <fullName evidence="1">Exodeoxyribonuclease 7 large subunit</fullName>
        <ecNumber evidence="1">3.1.11.6</ecNumber>
    </recommendedName>
    <alternativeName>
        <fullName evidence="1">Exodeoxyribonuclease VII large subunit</fullName>
        <shortName evidence="1">Exonuclease VII large subunit</shortName>
    </alternativeName>
</protein>
<feature type="chain" id="PRO_0000273681" description="Exodeoxyribonuclease 7 large subunit">
    <location>
        <begin position="1"/>
        <end position="398"/>
    </location>
</feature>